<reference key="1">
    <citation type="journal article" date="2007" name="PLoS Genet.">
        <title>Patterns and implications of gene gain and loss in the evolution of Prochlorococcus.</title>
        <authorList>
            <person name="Kettler G.C."/>
            <person name="Martiny A.C."/>
            <person name="Huang K."/>
            <person name="Zucker J."/>
            <person name="Coleman M.L."/>
            <person name="Rodrigue S."/>
            <person name="Chen F."/>
            <person name="Lapidus A."/>
            <person name="Ferriera S."/>
            <person name="Johnson J."/>
            <person name="Steglich C."/>
            <person name="Church G.M."/>
            <person name="Richardson P."/>
            <person name="Chisholm S.W."/>
        </authorList>
    </citation>
    <scope>NUCLEOTIDE SEQUENCE [LARGE SCALE GENOMIC DNA]</scope>
    <source>
        <strain>MIT 9515</strain>
    </source>
</reference>
<protein>
    <recommendedName>
        <fullName evidence="1">3-hydroxyacyl-[acyl-carrier-protein] dehydratase FabZ</fullName>
        <ecNumber evidence="1">4.2.1.59</ecNumber>
    </recommendedName>
    <alternativeName>
        <fullName evidence="1">(3R)-hydroxymyristoyl-[acyl-carrier-protein] dehydratase</fullName>
        <shortName evidence="1">(3R)-hydroxymyristoyl-ACP dehydrase</shortName>
    </alternativeName>
    <alternativeName>
        <fullName evidence="1">Beta-hydroxyacyl-ACP dehydratase</fullName>
    </alternativeName>
</protein>
<keyword id="KW-0963">Cytoplasm</keyword>
<keyword id="KW-0441">Lipid A biosynthesis</keyword>
<keyword id="KW-0444">Lipid biosynthesis</keyword>
<keyword id="KW-0443">Lipid metabolism</keyword>
<keyword id="KW-0456">Lyase</keyword>
<organism>
    <name type="scientific">Prochlorococcus marinus (strain MIT 9515)</name>
    <dbReference type="NCBI Taxonomy" id="167542"/>
    <lineage>
        <taxon>Bacteria</taxon>
        <taxon>Bacillati</taxon>
        <taxon>Cyanobacteriota</taxon>
        <taxon>Cyanophyceae</taxon>
        <taxon>Synechococcales</taxon>
        <taxon>Prochlorococcaceae</taxon>
        <taxon>Prochlorococcus</taxon>
    </lineage>
</organism>
<proteinExistence type="inferred from homology"/>
<dbReference type="EC" id="4.2.1.59" evidence="1"/>
<dbReference type="EMBL" id="CP000552">
    <property type="protein sequence ID" value="ABM72704.1"/>
    <property type="molecule type" value="Genomic_DNA"/>
</dbReference>
<dbReference type="RefSeq" id="WP_011820800.1">
    <property type="nucleotide sequence ID" value="NC_008817.1"/>
</dbReference>
<dbReference type="SMR" id="A2BY43"/>
<dbReference type="STRING" id="167542.P9515_14971"/>
<dbReference type="GeneID" id="60201240"/>
<dbReference type="KEGG" id="pmc:P9515_14971"/>
<dbReference type="eggNOG" id="COG0764">
    <property type="taxonomic scope" value="Bacteria"/>
</dbReference>
<dbReference type="HOGENOM" id="CLU_078912_1_1_3"/>
<dbReference type="OrthoDB" id="9772788at2"/>
<dbReference type="Proteomes" id="UP000001589">
    <property type="component" value="Chromosome"/>
</dbReference>
<dbReference type="GO" id="GO:0005737">
    <property type="term" value="C:cytoplasm"/>
    <property type="evidence" value="ECO:0007669"/>
    <property type="project" value="UniProtKB-SubCell"/>
</dbReference>
<dbReference type="GO" id="GO:0016020">
    <property type="term" value="C:membrane"/>
    <property type="evidence" value="ECO:0007669"/>
    <property type="project" value="GOC"/>
</dbReference>
<dbReference type="GO" id="GO:0019171">
    <property type="term" value="F:(3R)-hydroxyacyl-[acyl-carrier-protein] dehydratase activity"/>
    <property type="evidence" value="ECO:0007669"/>
    <property type="project" value="UniProtKB-EC"/>
</dbReference>
<dbReference type="GO" id="GO:0006633">
    <property type="term" value="P:fatty acid biosynthetic process"/>
    <property type="evidence" value="ECO:0007669"/>
    <property type="project" value="UniProtKB-UniRule"/>
</dbReference>
<dbReference type="GO" id="GO:0009245">
    <property type="term" value="P:lipid A biosynthetic process"/>
    <property type="evidence" value="ECO:0007669"/>
    <property type="project" value="UniProtKB-UniRule"/>
</dbReference>
<dbReference type="CDD" id="cd01288">
    <property type="entry name" value="FabZ"/>
    <property type="match status" value="1"/>
</dbReference>
<dbReference type="FunFam" id="3.10.129.10:FF:000001">
    <property type="entry name" value="3-hydroxyacyl-[acyl-carrier-protein] dehydratase FabZ"/>
    <property type="match status" value="1"/>
</dbReference>
<dbReference type="Gene3D" id="3.10.129.10">
    <property type="entry name" value="Hotdog Thioesterase"/>
    <property type="match status" value="1"/>
</dbReference>
<dbReference type="HAMAP" id="MF_00406">
    <property type="entry name" value="FabZ"/>
    <property type="match status" value="1"/>
</dbReference>
<dbReference type="InterPro" id="IPR013114">
    <property type="entry name" value="FabA_FabZ"/>
</dbReference>
<dbReference type="InterPro" id="IPR010084">
    <property type="entry name" value="FabZ"/>
</dbReference>
<dbReference type="InterPro" id="IPR029069">
    <property type="entry name" value="HotDog_dom_sf"/>
</dbReference>
<dbReference type="NCBIfam" id="TIGR01750">
    <property type="entry name" value="fabZ"/>
    <property type="match status" value="1"/>
</dbReference>
<dbReference type="NCBIfam" id="NF000582">
    <property type="entry name" value="PRK00006.1"/>
    <property type="match status" value="1"/>
</dbReference>
<dbReference type="PANTHER" id="PTHR30272">
    <property type="entry name" value="3-HYDROXYACYL-[ACYL-CARRIER-PROTEIN] DEHYDRATASE"/>
    <property type="match status" value="1"/>
</dbReference>
<dbReference type="PANTHER" id="PTHR30272:SF1">
    <property type="entry name" value="3-HYDROXYACYL-[ACYL-CARRIER-PROTEIN] DEHYDRATASE"/>
    <property type="match status" value="1"/>
</dbReference>
<dbReference type="Pfam" id="PF07977">
    <property type="entry name" value="FabA"/>
    <property type="match status" value="1"/>
</dbReference>
<dbReference type="SUPFAM" id="SSF54637">
    <property type="entry name" value="Thioesterase/thiol ester dehydrase-isomerase"/>
    <property type="match status" value="1"/>
</dbReference>
<sequence length="152" mass="16846">MDKQLLSENNQLSSEEILGLLPHRFPFALVDRVIEHIPGHKAVALKNVTINEPQFQGHFPERPLMPGVLIVESMAQVGGIIVTQMPDLPKGLFVFAGINNVKFRRPVLPGDQLVITCELLSIKRQRFGKVKGEAHVDGKLVCSGELMFSLVD</sequence>
<accession>A2BY43</accession>
<evidence type="ECO:0000255" key="1">
    <source>
        <dbReference type="HAMAP-Rule" id="MF_00406"/>
    </source>
</evidence>
<gene>
    <name evidence="1" type="primary">fabZ</name>
    <name type="ordered locus">P9515_14971</name>
</gene>
<comment type="function">
    <text evidence="1">Involved in unsaturated fatty acids biosynthesis. Catalyzes the dehydration of short chain beta-hydroxyacyl-ACPs and long chain saturated and unsaturated beta-hydroxyacyl-ACPs.</text>
</comment>
<comment type="catalytic activity">
    <reaction evidence="1">
        <text>a (3R)-hydroxyacyl-[ACP] = a (2E)-enoyl-[ACP] + H2O</text>
        <dbReference type="Rhea" id="RHEA:13097"/>
        <dbReference type="Rhea" id="RHEA-COMP:9925"/>
        <dbReference type="Rhea" id="RHEA-COMP:9945"/>
        <dbReference type="ChEBI" id="CHEBI:15377"/>
        <dbReference type="ChEBI" id="CHEBI:78784"/>
        <dbReference type="ChEBI" id="CHEBI:78827"/>
        <dbReference type="EC" id="4.2.1.59"/>
    </reaction>
</comment>
<comment type="subcellular location">
    <subcellularLocation>
        <location evidence="1">Cytoplasm</location>
    </subcellularLocation>
</comment>
<comment type="similarity">
    <text evidence="1">Belongs to the thioester dehydratase family. FabZ subfamily.</text>
</comment>
<feature type="chain" id="PRO_0000301910" description="3-hydroxyacyl-[acyl-carrier-protein] dehydratase FabZ">
    <location>
        <begin position="1"/>
        <end position="152"/>
    </location>
</feature>
<feature type="active site" evidence="1">
    <location>
        <position position="58"/>
    </location>
</feature>
<name>FABZ_PROM5</name>